<name>RLMH_NEIM0</name>
<reference key="1">
    <citation type="journal article" date="2008" name="Genomics">
        <title>Characterization of ST-4821 complex, a unique Neisseria meningitidis clone.</title>
        <authorList>
            <person name="Peng J."/>
            <person name="Yang L."/>
            <person name="Yang F."/>
            <person name="Yang J."/>
            <person name="Yan Y."/>
            <person name="Nie H."/>
            <person name="Zhang X."/>
            <person name="Xiong Z."/>
            <person name="Jiang Y."/>
            <person name="Cheng F."/>
            <person name="Xu X."/>
            <person name="Chen S."/>
            <person name="Sun L."/>
            <person name="Li W."/>
            <person name="Shen Y."/>
            <person name="Shao Z."/>
            <person name="Liang X."/>
            <person name="Xu J."/>
            <person name="Jin Q."/>
        </authorList>
    </citation>
    <scope>NUCLEOTIDE SEQUENCE [LARGE SCALE GENOMIC DNA]</scope>
    <source>
        <strain>053442</strain>
    </source>
</reference>
<gene>
    <name evidence="1" type="primary">rlmH</name>
    <name type="ordered locus">NMCC_0177</name>
</gene>
<dbReference type="EC" id="2.1.1.177" evidence="1"/>
<dbReference type="EMBL" id="CP000381">
    <property type="protein sequence ID" value="ABX72393.1"/>
    <property type="status" value="ALT_INIT"/>
    <property type="molecule type" value="Genomic_DNA"/>
</dbReference>
<dbReference type="RefSeq" id="WP_012221174.1">
    <property type="nucleotide sequence ID" value="NC_010120.1"/>
</dbReference>
<dbReference type="SMR" id="A9M0D2"/>
<dbReference type="KEGG" id="nmn:NMCC_0177"/>
<dbReference type="HOGENOM" id="CLU_100552_1_0_4"/>
<dbReference type="Proteomes" id="UP000001177">
    <property type="component" value="Chromosome"/>
</dbReference>
<dbReference type="GO" id="GO:0005737">
    <property type="term" value="C:cytoplasm"/>
    <property type="evidence" value="ECO:0007669"/>
    <property type="project" value="UniProtKB-SubCell"/>
</dbReference>
<dbReference type="GO" id="GO:0070038">
    <property type="term" value="F:rRNA (pseudouridine-N3-)-methyltransferase activity"/>
    <property type="evidence" value="ECO:0007669"/>
    <property type="project" value="UniProtKB-UniRule"/>
</dbReference>
<dbReference type="CDD" id="cd18081">
    <property type="entry name" value="RlmH-like"/>
    <property type="match status" value="1"/>
</dbReference>
<dbReference type="Gene3D" id="3.40.1280.10">
    <property type="match status" value="1"/>
</dbReference>
<dbReference type="HAMAP" id="MF_00658">
    <property type="entry name" value="23SrRNA_methyltr_H"/>
    <property type="match status" value="1"/>
</dbReference>
<dbReference type="InterPro" id="IPR029028">
    <property type="entry name" value="Alpha/beta_knot_MTases"/>
</dbReference>
<dbReference type="InterPro" id="IPR003742">
    <property type="entry name" value="RlmH-like"/>
</dbReference>
<dbReference type="InterPro" id="IPR029026">
    <property type="entry name" value="tRNA_m1G_MTases_N"/>
</dbReference>
<dbReference type="NCBIfam" id="NF000986">
    <property type="entry name" value="PRK00103.1-4"/>
    <property type="match status" value="1"/>
</dbReference>
<dbReference type="PANTHER" id="PTHR33603">
    <property type="entry name" value="METHYLTRANSFERASE"/>
    <property type="match status" value="1"/>
</dbReference>
<dbReference type="PANTHER" id="PTHR33603:SF1">
    <property type="entry name" value="RIBOSOMAL RNA LARGE SUBUNIT METHYLTRANSFERASE H"/>
    <property type="match status" value="1"/>
</dbReference>
<dbReference type="Pfam" id="PF02590">
    <property type="entry name" value="SPOUT_MTase"/>
    <property type="match status" value="1"/>
</dbReference>
<dbReference type="PIRSF" id="PIRSF004505">
    <property type="entry name" value="MT_bac"/>
    <property type="match status" value="1"/>
</dbReference>
<dbReference type="SUPFAM" id="SSF75217">
    <property type="entry name" value="alpha/beta knot"/>
    <property type="match status" value="1"/>
</dbReference>
<sequence>MNITVLAVGTKMPRWVDEAVAEYAKRFGRDVAYALKEIKPEKRGAGVNAAQGMAAEEKRILEAIPQGAFLVVLDERGKAPTSVELAEHLKTWQQNGEHVCFVIGGADGMTDRLKQQARIMMRLSSLTLPHGMVRVLLTEQLYRAASILHNHPYHRE</sequence>
<organism>
    <name type="scientific">Neisseria meningitidis serogroup C (strain 053442)</name>
    <dbReference type="NCBI Taxonomy" id="374833"/>
    <lineage>
        <taxon>Bacteria</taxon>
        <taxon>Pseudomonadati</taxon>
        <taxon>Pseudomonadota</taxon>
        <taxon>Betaproteobacteria</taxon>
        <taxon>Neisseriales</taxon>
        <taxon>Neisseriaceae</taxon>
        <taxon>Neisseria</taxon>
    </lineage>
</organism>
<keyword id="KW-0963">Cytoplasm</keyword>
<keyword id="KW-0489">Methyltransferase</keyword>
<keyword id="KW-0698">rRNA processing</keyword>
<keyword id="KW-0949">S-adenosyl-L-methionine</keyword>
<keyword id="KW-0808">Transferase</keyword>
<protein>
    <recommendedName>
        <fullName evidence="1">Ribosomal RNA large subunit methyltransferase H</fullName>
        <ecNumber evidence="1">2.1.1.177</ecNumber>
    </recommendedName>
    <alternativeName>
        <fullName evidence="1">23S rRNA (pseudouridine1915-N3)-methyltransferase</fullName>
    </alternativeName>
    <alternativeName>
        <fullName evidence="1">23S rRNA m3Psi1915 methyltransferase</fullName>
    </alternativeName>
    <alternativeName>
        <fullName evidence="1">rRNA (pseudouridine-N3-)-methyltransferase RlmH</fullName>
    </alternativeName>
</protein>
<proteinExistence type="inferred from homology"/>
<evidence type="ECO:0000255" key="1">
    <source>
        <dbReference type="HAMAP-Rule" id="MF_00658"/>
    </source>
</evidence>
<evidence type="ECO:0000305" key="2"/>
<accession>A9M0D2</accession>
<feature type="chain" id="PRO_0000366628" description="Ribosomal RNA large subunit methyltransferase H">
    <location>
        <begin position="1"/>
        <end position="156"/>
    </location>
</feature>
<feature type="binding site" evidence="1">
    <location>
        <position position="73"/>
    </location>
    <ligand>
        <name>S-adenosyl-L-methionine</name>
        <dbReference type="ChEBI" id="CHEBI:59789"/>
    </ligand>
</feature>
<feature type="binding site" evidence="1">
    <location>
        <position position="104"/>
    </location>
    <ligand>
        <name>S-adenosyl-L-methionine</name>
        <dbReference type="ChEBI" id="CHEBI:59789"/>
    </ligand>
</feature>
<feature type="binding site" evidence="1">
    <location>
        <begin position="123"/>
        <end position="128"/>
    </location>
    <ligand>
        <name>S-adenosyl-L-methionine</name>
        <dbReference type="ChEBI" id="CHEBI:59789"/>
    </ligand>
</feature>
<comment type="function">
    <text evidence="1">Specifically methylates the pseudouridine at position 1915 (m3Psi1915) in 23S rRNA.</text>
</comment>
<comment type="catalytic activity">
    <reaction evidence="1">
        <text>pseudouridine(1915) in 23S rRNA + S-adenosyl-L-methionine = N(3)-methylpseudouridine(1915) in 23S rRNA + S-adenosyl-L-homocysteine + H(+)</text>
        <dbReference type="Rhea" id="RHEA:42752"/>
        <dbReference type="Rhea" id="RHEA-COMP:10221"/>
        <dbReference type="Rhea" id="RHEA-COMP:10222"/>
        <dbReference type="ChEBI" id="CHEBI:15378"/>
        <dbReference type="ChEBI" id="CHEBI:57856"/>
        <dbReference type="ChEBI" id="CHEBI:59789"/>
        <dbReference type="ChEBI" id="CHEBI:65314"/>
        <dbReference type="ChEBI" id="CHEBI:74486"/>
        <dbReference type="EC" id="2.1.1.177"/>
    </reaction>
</comment>
<comment type="subunit">
    <text evidence="1">Homodimer.</text>
</comment>
<comment type="subcellular location">
    <subcellularLocation>
        <location evidence="1">Cytoplasm</location>
    </subcellularLocation>
</comment>
<comment type="similarity">
    <text evidence="1">Belongs to the RNA methyltransferase RlmH family.</text>
</comment>
<comment type="sequence caution" evidence="2">
    <conflict type="erroneous initiation">
        <sequence resource="EMBL-CDS" id="ABX72393"/>
    </conflict>
</comment>